<name>MGT_STAA1</name>
<accession>A7X3Z2</accession>
<comment type="function">
    <text evidence="1">Peptidoglycan polymerase that catalyzes glycan chain elongation using lipid-linked disaccharide-pentapeptide as the substrate.</text>
</comment>
<comment type="catalytic activity">
    <reaction evidence="1">
        <text>[GlcNAc-(1-&gt;4)-Mur2Ac(oyl-L-Ala-gamma-D-Glu-L-Lys-D-Ala-D-Ala)](n)-di-trans,octa-cis-undecaprenyl diphosphate + beta-D-GlcNAc-(1-&gt;4)-Mur2Ac(oyl-L-Ala-gamma-D-Glu-L-Lys-D-Ala-D-Ala)-di-trans,octa-cis-undecaprenyl diphosphate = [GlcNAc-(1-&gt;4)-Mur2Ac(oyl-L-Ala-gamma-D-Glu-L-Lys-D-Ala-D-Ala)](n+1)-di-trans,octa-cis-undecaprenyl diphosphate + di-trans,octa-cis-undecaprenyl diphosphate + H(+)</text>
        <dbReference type="Rhea" id="RHEA:23708"/>
        <dbReference type="Rhea" id="RHEA-COMP:9602"/>
        <dbReference type="Rhea" id="RHEA-COMP:9603"/>
        <dbReference type="ChEBI" id="CHEBI:15378"/>
        <dbReference type="ChEBI" id="CHEBI:58405"/>
        <dbReference type="ChEBI" id="CHEBI:60033"/>
        <dbReference type="ChEBI" id="CHEBI:78435"/>
        <dbReference type="EC" id="2.4.99.28"/>
    </reaction>
</comment>
<comment type="pathway">
    <text evidence="1">Cell wall biogenesis; peptidoglycan biosynthesis.</text>
</comment>
<comment type="subcellular location">
    <subcellularLocation>
        <location evidence="1">Cell membrane</location>
        <topology evidence="1">Single-pass membrane protein</topology>
    </subcellularLocation>
</comment>
<comment type="similarity">
    <text evidence="1">Belongs to the glycosyltransferase 51 family.</text>
</comment>
<feature type="chain" id="PRO_1000017362" description="Monofunctional glycosyltransferase">
    <location>
        <begin position="1"/>
        <end position="269"/>
    </location>
</feature>
<feature type="transmembrane region" description="Helical" evidence="1">
    <location>
        <begin position="46"/>
        <end position="66"/>
    </location>
</feature>
<keyword id="KW-1003">Cell membrane</keyword>
<keyword id="KW-0133">Cell shape</keyword>
<keyword id="KW-0961">Cell wall biogenesis/degradation</keyword>
<keyword id="KW-0328">Glycosyltransferase</keyword>
<keyword id="KW-0472">Membrane</keyword>
<keyword id="KW-0573">Peptidoglycan synthesis</keyword>
<keyword id="KW-0808">Transferase</keyword>
<keyword id="KW-0812">Transmembrane</keyword>
<keyword id="KW-1133">Transmembrane helix</keyword>
<gene>
    <name evidence="1" type="primary">mgt</name>
    <name type="ordered locus">SAHV_1859</name>
</gene>
<proteinExistence type="inferred from homology"/>
<sequence>MKRSDRYSNSNEHFEHMKHEPHYNTYYQPVGKPPKKKKSKRILLKILLTILIIIALFIGIMYFLSTRDNVDELRKIENKSSFVSADNMPEYVKGAFISMEDERFYNHHGFDLKGTTRALFSTISDRDVQGGSTITQQVVKNYFYDNDRSFTRKVKELFVAHRVEKQYNKNEILSFYLNNIYFGDNQYTLEGAANHYFGTTVNKNSTTMSHITVLQSAILASKVNAPSVYNINNMSENFTQRVSTNLEKMKQQNYINETQYQQAMSQLNR</sequence>
<protein>
    <recommendedName>
        <fullName evidence="1">Monofunctional glycosyltransferase</fullName>
        <shortName evidence="1">MGT</shortName>
        <ecNumber evidence="1">2.4.99.28</ecNumber>
    </recommendedName>
    <alternativeName>
        <fullName evidence="1">Peptidoglycan TGase</fullName>
    </alternativeName>
</protein>
<dbReference type="EC" id="2.4.99.28" evidence="1"/>
<dbReference type="EMBL" id="AP009324">
    <property type="protein sequence ID" value="BAF78742.1"/>
    <property type="molecule type" value="Genomic_DNA"/>
</dbReference>
<dbReference type="SMR" id="A7X3Z2"/>
<dbReference type="CAZy" id="GT51">
    <property type="family name" value="Glycosyltransferase Family 51"/>
</dbReference>
<dbReference type="KEGG" id="saw:SAHV_1859"/>
<dbReference type="HOGENOM" id="CLU_006354_1_2_9"/>
<dbReference type="UniPathway" id="UPA00219"/>
<dbReference type="GO" id="GO:0030288">
    <property type="term" value="C:outer membrane-bounded periplasmic space"/>
    <property type="evidence" value="ECO:0007669"/>
    <property type="project" value="TreeGrafter"/>
</dbReference>
<dbReference type="GO" id="GO:0005886">
    <property type="term" value="C:plasma membrane"/>
    <property type="evidence" value="ECO:0007669"/>
    <property type="project" value="UniProtKB-SubCell"/>
</dbReference>
<dbReference type="GO" id="GO:0008955">
    <property type="term" value="F:peptidoglycan glycosyltransferase activity"/>
    <property type="evidence" value="ECO:0007669"/>
    <property type="project" value="UniProtKB-UniRule"/>
</dbReference>
<dbReference type="GO" id="GO:0071555">
    <property type="term" value="P:cell wall organization"/>
    <property type="evidence" value="ECO:0007669"/>
    <property type="project" value="UniProtKB-KW"/>
</dbReference>
<dbReference type="GO" id="GO:0009252">
    <property type="term" value="P:peptidoglycan biosynthetic process"/>
    <property type="evidence" value="ECO:0007669"/>
    <property type="project" value="UniProtKB-UniRule"/>
</dbReference>
<dbReference type="GO" id="GO:0008360">
    <property type="term" value="P:regulation of cell shape"/>
    <property type="evidence" value="ECO:0007669"/>
    <property type="project" value="UniProtKB-KW"/>
</dbReference>
<dbReference type="Gene3D" id="1.10.3810.10">
    <property type="entry name" value="Biosynthetic peptidoglycan transglycosylase-like"/>
    <property type="match status" value="1"/>
</dbReference>
<dbReference type="HAMAP" id="MF_01434">
    <property type="entry name" value="MGT"/>
    <property type="match status" value="1"/>
</dbReference>
<dbReference type="InterPro" id="IPR001264">
    <property type="entry name" value="Glyco_trans_51"/>
</dbReference>
<dbReference type="InterPro" id="IPR050396">
    <property type="entry name" value="Glycosyltr_51/Transpeptidase"/>
</dbReference>
<dbReference type="InterPro" id="IPR023346">
    <property type="entry name" value="Lysozyme-like_dom_sf"/>
</dbReference>
<dbReference type="InterPro" id="IPR022978">
    <property type="entry name" value="Monofunct_glyco_trans"/>
</dbReference>
<dbReference type="InterPro" id="IPR036950">
    <property type="entry name" value="PBP_transglycosylase"/>
</dbReference>
<dbReference type="NCBIfam" id="NF010008">
    <property type="entry name" value="PRK13481.1"/>
    <property type="match status" value="1"/>
</dbReference>
<dbReference type="PANTHER" id="PTHR32282">
    <property type="entry name" value="BINDING PROTEIN TRANSPEPTIDASE, PUTATIVE-RELATED"/>
    <property type="match status" value="1"/>
</dbReference>
<dbReference type="PANTHER" id="PTHR32282:SF11">
    <property type="entry name" value="PENICILLIN-BINDING PROTEIN 1B"/>
    <property type="match status" value="1"/>
</dbReference>
<dbReference type="Pfam" id="PF00912">
    <property type="entry name" value="Transgly"/>
    <property type="match status" value="1"/>
</dbReference>
<dbReference type="SUPFAM" id="SSF53955">
    <property type="entry name" value="Lysozyme-like"/>
    <property type="match status" value="1"/>
</dbReference>
<organism>
    <name type="scientific">Staphylococcus aureus (strain Mu3 / ATCC 700698)</name>
    <dbReference type="NCBI Taxonomy" id="418127"/>
    <lineage>
        <taxon>Bacteria</taxon>
        <taxon>Bacillati</taxon>
        <taxon>Bacillota</taxon>
        <taxon>Bacilli</taxon>
        <taxon>Bacillales</taxon>
        <taxon>Staphylococcaceae</taxon>
        <taxon>Staphylococcus</taxon>
    </lineage>
</organism>
<evidence type="ECO:0000255" key="1">
    <source>
        <dbReference type="HAMAP-Rule" id="MF_01434"/>
    </source>
</evidence>
<reference key="1">
    <citation type="journal article" date="2008" name="Antimicrob. Agents Chemother.">
        <title>Mutated response regulator graR is responsible for phenotypic conversion of Staphylococcus aureus from heterogeneous vancomycin-intermediate resistance to vancomycin-intermediate resistance.</title>
        <authorList>
            <person name="Neoh H.-M."/>
            <person name="Cui L."/>
            <person name="Yuzawa H."/>
            <person name="Takeuchi F."/>
            <person name="Matsuo M."/>
            <person name="Hiramatsu K."/>
        </authorList>
    </citation>
    <scope>NUCLEOTIDE SEQUENCE [LARGE SCALE GENOMIC DNA]</scope>
    <source>
        <strain>Mu3 / ATCC 700698</strain>
    </source>
</reference>